<evidence type="ECO:0000255" key="1">
    <source>
        <dbReference type="HAMAP-Rule" id="MF_00815"/>
    </source>
</evidence>
<organism>
    <name type="scientific">Mannheimia succiniciproducens (strain KCTC 0769BP / MBEL55E)</name>
    <dbReference type="NCBI Taxonomy" id="221988"/>
    <lineage>
        <taxon>Bacteria</taxon>
        <taxon>Pseudomonadati</taxon>
        <taxon>Pseudomonadota</taxon>
        <taxon>Gammaproteobacteria</taxon>
        <taxon>Pasteurellales</taxon>
        <taxon>Pasteurellaceae</taxon>
        <taxon>Basfia</taxon>
    </lineage>
</organism>
<protein>
    <recommendedName>
        <fullName evidence="1">ATP synthase gamma chain</fullName>
    </recommendedName>
    <alternativeName>
        <fullName evidence="1">ATP synthase F1 sector gamma subunit</fullName>
    </alternativeName>
    <alternativeName>
        <fullName evidence="1">F-ATPase gamma subunit</fullName>
    </alternativeName>
</protein>
<accession>Q65Q06</accession>
<dbReference type="EMBL" id="AE016827">
    <property type="protein sequence ID" value="AAU38954.1"/>
    <property type="molecule type" value="Genomic_DNA"/>
</dbReference>
<dbReference type="RefSeq" id="WP_011201492.1">
    <property type="nucleotide sequence ID" value="NC_006300.1"/>
</dbReference>
<dbReference type="SMR" id="Q65Q06"/>
<dbReference type="STRING" id="221988.MS2347"/>
<dbReference type="KEGG" id="msu:MS2347"/>
<dbReference type="eggNOG" id="COG0224">
    <property type="taxonomic scope" value="Bacteria"/>
</dbReference>
<dbReference type="HOGENOM" id="CLU_050669_0_1_6"/>
<dbReference type="OrthoDB" id="9812769at2"/>
<dbReference type="Proteomes" id="UP000000607">
    <property type="component" value="Chromosome"/>
</dbReference>
<dbReference type="GO" id="GO:0005886">
    <property type="term" value="C:plasma membrane"/>
    <property type="evidence" value="ECO:0007669"/>
    <property type="project" value="UniProtKB-SubCell"/>
</dbReference>
<dbReference type="GO" id="GO:0045259">
    <property type="term" value="C:proton-transporting ATP synthase complex"/>
    <property type="evidence" value="ECO:0007669"/>
    <property type="project" value="UniProtKB-KW"/>
</dbReference>
<dbReference type="GO" id="GO:0005524">
    <property type="term" value="F:ATP binding"/>
    <property type="evidence" value="ECO:0007669"/>
    <property type="project" value="UniProtKB-UniRule"/>
</dbReference>
<dbReference type="GO" id="GO:0046933">
    <property type="term" value="F:proton-transporting ATP synthase activity, rotational mechanism"/>
    <property type="evidence" value="ECO:0007669"/>
    <property type="project" value="UniProtKB-UniRule"/>
</dbReference>
<dbReference type="GO" id="GO:0042777">
    <property type="term" value="P:proton motive force-driven plasma membrane ATP synthesis"/>
    <property type="evidence" value="ECO:0007669"/>
    <property type="project" value="UniProtKB-UniRule"/>
</dbReference>
<dbReference type="CDD" id="cd12151">
    <property type="entry name" value="F1-ATPase_gamma"/>
    <property type="match status" value="1"/>
</dbReference>
<dbReference type="FunFam" id="1.10.287.80:FF:000005">
    <property type="entry name" value="ATP synthase gamma chain"/>
    <property type="match status" value="1"/>
</dbReference>
<dbReference type="FunFam" id="3.40.1380.10:FF:000006">
    <property type="entry name" value="ATP synthase gamma chain"/>
    <property type="match status" value="1"/>
</dbReference>
<dbReference type="Gene3D" id="3.40.1380.10">
    <property type="match status" value="1"/>
</dbReference>
<dbReference type="Gene3D" id="1.10.287.80">
    <property type="entry name" value="ATP synthase, gamma subunit, helix hairpin domain"/>
    <property type="match status" value="2"/>
</dbReference>
<dbReference type="HAMAP" id="MF_00815">
    <property type="entry name" value="ATP_synth_gamma_bact"/>
    <property type="match status" value="1"/>
</dbReference>
<dbReference type="InterPro" id="IPR035968">
    <property type="entry name" value="ATP_synth_F1_ATPase_gsu"/>
</dbReference>
<dbReference type="InterPro" id="IPR000131">
    <property type="entry name" value="ATP_synth_F1_gsu"/>
</dbReference>
<dbReference type="InterPro" id="IPR023632">
    <property type="entry name" value="ATP_synth_F1_gsu_CS"/>
</dbReference>
<dbReference type="NCBIfam" id="TIGR01146">
    <property type="entry name" value="ATPsyn_F1gamma"/>
    <property type="match status" value="1"/>
</dbReference>
<dbReference type="NCBIfam" id="NF004144">
    <property type="entry name" value="PRK05621.1-1"/>
    <property type="match status" value="1"/>
</dbReference>
<dbReference type="PANTHER" id="PTHR11693">
    <property type="entry name" value="ATP SYNTHASE GAMMA CHAIN"/>
    <property type="match status" value="1"/>
</dbReference>
<dbReference type="PANTHER" id="PTHR11693:SF22">
    <property type="entry name" value="ATP SYNTHASE SUBUNIT GAMMA, MITOCHONDRIAL"/>
    <property type="match status" value="1"/>
</dbReference>
<dbReference type="Pfam" id="PF00231">
    <property type="entry name" value="ATP-synt"/>
    <property type="match status" value="1"/>
</dbReference>
<dbReference type="PRINTS" id="PR00126">
    <property type="entry name" value="ATPASEGAMMA"/>
</dbReference>
<dbReference type="SUPFAM" id="SSF52943">
    <property type="entry name" value="ATP synthase (F1-ATPase), gamma subunit"/>
    <property type="match status" value="1"/>
</dbReference>
<dbReference type="PROSITE" id="PS00153">
    <property type="entry name" value="ATPASE_GAMMA"/>
    <property type="match status" value="1"/>
</dbReference>
<name>ATPG_MANSM</name>
<sequence length="289" mass="31964">MASGKEIKTKIASVQSTQKITKAMEMVATSKMRKTQDRMAASRPYSETIRNVISHVSKASIGYKHPFLVEREVKKVGMLVISTDRGMCGGLNINLFKTVLNEIKKWKEQGITVEVGVIGSKGIAFFRSLGLKIRAQHSGMGDNPSVEELLGIANDMFDAYKDGKIDALYLAHNQFINTMSQKPSFAQLVPLPELDTDNLGERQQAWDYIYEPDPKMLLDSLLTRYLESQVYQSVVDNLASEQAARMVAMKAATDNAGNLINDLQLVYNKARQASITNELNEIVAGAAAI</sequence>
<comment type="function">
    <text evidence="1">Produces ATP from ADP in the presence of a proton gradient across the membrane. The gamma chain is believed to be important in regulating ATPase activity and the flow of protons through the CF(0) complex.</text>
</comment>
<comment type="subunit">
    <text evidence="1">F-type ATPases have 2 components, CF(1) - the catalytic core - and CF(0) - the membrane proton channel. CF(1) has five subunits: alpha(3), beta(3), gamma(1), delta(1), epsilon(1). CF(0) has three main subunits: a, b and c.</text>
</comment>
<comment type="subcellular location">
    <subcellularLocation>
        <location evidence="1">Cell inner membrane</location>
        <topology evidence="1">Peripheral membrane protein</topology>
    </subcellularLocation>
</comment>
<comment type="similarity">
    <text evidence="1">Belongs to the ATPase gamma chain family.</text>
</comment>
<feature type="chain" id="PRO_0000073311" description="ATP synthase gamma chain">
    <location>
        <begin position="1"/>
        <end position="289"/>
    </location>
</feature>
<proteinExistence type="inferred from homology"/>
<gene>
    <name evidence="1" type="primary">atpG</name>
    <name type="ordered locus">MS2347</name>
</gene>
<reference key="1">
    <citation type="journal article" date="2004" name="Nat. Biotechnol.">
        <title>The genome sequence of the capnophilic rumen bacterium Mannheimia succiniciproducens.</title>
        <authorList>
            <person name="Hong S.H."/>
            <person name="Kim J.S."/>
            <person name="Lee S.Y."/>
            <person name="In Y.H."/>
            <person name="Choi S.S."/>
            <person name="Rih J.-K."/>
            <person name="Kim C.H."/>
            <person name="Jeong H."/>
            <person name="Hur C.G."/>
            <person name="Kim J.J."/>
        </authorList>
    </citation>
    <scope>NUCLEOTIDE SEQUENCE [LARGE SCALE GENOMIC DNA]</scope>
    <source>
        <strain>KCTC 0769BP / MBEL55E</strain>
    </source>
</reference>
<keyword id="KW-0066">ATP synthesis</keyword>
<keyword id="KW-0997">Cell inner membrane</keyword>
<keyword id="KW-1003">Cell membrane</keyword>
<keyword id="KW-0139">CF(1)</keyword>
<keyword id="KW-0375">Hydrogen ion transport</keyword>
<keyword id="KW-0406">Ion transport</keyword>
<keyword id="KW-0472">Membrane</keyword>
<keyword id="KW-0813">Transport</keyword>